<dbReference type="EC" id="6.1.1.4" evidence="1"/>
<dbReference type="EMBL" id="AM743169">
    <property type="protein sequence ID" value="CAQ46908.1"/>
    <property type="molecule type" value="Genomic_DNA"/>
</dbReference>
<dbReference type="RefSeq" id="WP_012480931.1">
    <property type="nucleotide sequence ID" value="NC_010943.1"/>
</dbReference>
<dbReference type="SMR" id="B2FPR7"/>
<dbReference type="EnsemblBacteria" id="CAQ46908">
    <property type="protein sequence ID" value="CAQ46908"/>
    <property type="gene ID" value="Smlt3485"/>
</dbReference>
<dbReference type="GeneID" id="93834485"/>
<dbReference type="KEGG" id="sml:Smlt3485"/>
<dbReference type="eggNOG" id="COG0495">
    <property type="taxonomic scope" value="Bacteria"/>
</dbReference>
<dbReference type="HOGENOM" id="CLU_004427_0_0_6"/>
<dbReference type="Proteomes" id="UP000008840">
    <property type="component" value="Chromosome"/>
</dbReference>
<dbReference type="GO" id="GO:0005829">
    <property type="term" value="C:cytosol"/>
    <property type="evidence" value="ECO:0007669"/>
    <property type="project" value="TreeGrafter"/>
</dbReference>
<dbReference type="GO" id="GO:0002161">
    <property type="term" value="F:aminoacyl-tRNA deacylase activity"/>
    <property type="evidence" value="ECO:0007669"/>
    <property type="project" value="InterPro"/>
</dbReference>
<dbReference type="GO" id="GO:0005524">
    <property type="term" value="F:ATP binding"/>
    <property type="evidence" value="ECO:0007669"/>
    <property type="project" value="UniProtKB-UniRule"/>
</dbReference>
<dbReference type="GO" id="GO:0004823">
    <property type="term" value="F:leucine-tRNA ligase activity"/>
    <property type="evidence" value="ECO:0007669"/>
    <property type="project" value="UniProtKB-UniRule"/>
</dbReference>
<dbReference type="GO" id="GO:0006429">
    <property type="term" value="P:leucyl-tRNA aminoacylation"/>
    <property type="evidence" value="ECO:0007669"/>
    <property type="project" value="UniProtKB-UniRule"/>
</dbReference>
<dbReference type="CDD" id="cd07958">
    <property type="entry name" value="Anticodon_Ia_Leu_BEm"/>
    <property type="match status" value="1"/>
</dbReference>
<dbReference type="CDD" id="cd00812">
    <property type="entry name" value="LeuRS_core"/>
    <property type="match status" value="1"/>
</dbReference>
<dbReference type="FunFam" id="1.10.730.10:FF:000003">
    <property type="entry name" value="Leucine--tRNA ligase"/>
    <property type="match status" value="1"/>
</dbReference>
<dbReference type="FunFam" id="2.20.28.290:FF:000001">
    <property type="entry name" value="Leucine--tRNA ligase"/>
    <property type="match status" value="1"/>
</dbReference>
<dbReference type="FunFam" id="3.10.20.590:FF:000001">
    <property type="entry name" value="Leucine--tRNA ligase"/>
    <property type="match status" value="1"/>
</dbReference>
<dbReference type="FunFam" id="3.40.50.620:FF:000003">
    <property type="entry name" value="Leucine--tRNA ligase"/>
    <property type="match status" value="1"/>
</dbReference>
<dbReference type="FunFam" id="3.40.50.620:FF:000124">
    <property type="entry name" value="Leucine--tRNA ligase"/>
    <property type="match status" value="1"/>
</dbReference>
<dbReference type="FunFam" id="3.90.740.10:FF:000012">
    <property type="entry name" value="Leucine--tRNA ligase"/>
    <property type="match status" value="1"/>
</dbReference>
<dbReference type="Gene3D" id="2.20.28.290">
    <property type="match status" value="1"/>
</dbReference>
<dbReference type="Gene3D" id="3.10.20.590">
    <property type="match status" value="1"/>
</dbReference>
<dbReference type="Gene3D" id="3.40.50.620">
    <property type="entry name" value="HUPs"/>
    <property type="match status" value="2"/>
</dbReference>
<dbReference type="Gene3D" id="1.10.730.10">
    <property type="entry name" value="Isoleucyl-tRNA Synthetase, Domain 1"/>
    <property type="match status" value="2"/>
</dbReference>
<dbReference type="Gene3D" id="3.90.740.10">
    <property type="entry name" value="Valyl/Leucyl/Isoleucyl-tRNA synthetase, editing domain"/>
    <property type="match status" value="1"/>
</dbReference>
<dbReference type="HAMAP" id="MF_00049_B">
    <property type="entry name" value="Leu_tRNA_synth_B"/>
    <property type="match status" value="1"/>
</dbReference>
<dbReference type="InterPro" id="IPR001412">
    <property type="entry name" value="aa-tRNA-synth_I_CS"/>
</dbReference>
<dbReference type="InterPro" id="IPR002300">
    <property type="entry name" value="aa-tRNA-synth_Ia"/>
</dbReference>
<dbReference type="InterPro" id="IPR002302">
    <property type="entry name" value="Leu-tRNA-ligase"/>
</dbReference>
<dbReference type="InterPro" id="IPR025709">
    <property type="entry name" value="Leu_tRNA-synth_edit"/>
</dbReference>
<dbReference type="InterPro" id="IPR013155">
    <property type="entry name" value="M/V/L/I-tRNA-synth_anticd-bd"/>
</dbReference>
<dbReference type="InterPro" id="IPR015413">
    <property type="entry name" value="Methionyl/Leucyl_tRNA_Synth"/>
</dbReference>
<dbReference type="InterPro" id="IPR014729">
    <property type="entry name" value="Rossmann-like_a/b/a_fold"/>
</dbReference>
<dbReference type="InterPro" id="IPR009080">
    <property type="entry name" value="tRNAsynth_Ia_anticodon-bd"/>
</dbReference>
<dbReference type="InterPro" id="IPR009008">
    <property type="entry name" value="Val/Leu/Ile-tRNA-synth_edit"/>
</dbReference>
<dbReference type="NCBIfam" id="TIGR00396">
    <property type="entry name" value="leuS_bact"/>
    <property type="match status" value="1"/>
</dbReference>
<dbReference type="PANTHER" id="PTHR43740:SF2">
    <property type="entry name" value="LEUCINE--TRNA LIGASE, MITOCHONDRIAL"/>
    <property type="match status" value="1"/>
</dbReference>
<dbReference type="PANTHER" id="PTHR43740">
    <property type="entry name" value="LEUCYL-TRNA SYNTHETASE"/>
    <property type="match status" value="1"/>
</dbReference>
<dbReference type="Pfam" id="PF08264">
    <property type="entry name" value="Anticodon_1"/>
    <property type="match status" value="1"/>
</dbReference>
<dbReference type="Pfam" id="PF00133">
    <property type="entry name" value="tRNA-synt_1"/>
    <property type="match status" value="2"/>
</dbReference>
<dbReference type="Pfam" id="PF13603">
    <property type="entry name" value="tRNA-synt_1_2"/>
    <property type="match status" value="1"/>
</dbReference>
<dbReference type="Pfam" id="PF09334">
    <property type="entry name" value="tRNA-synt_1g"/>
    <property type="match status" value="1"/>
</dbReference>
<dbReference type="PRINTS" id="PR00985">
    <property type="entry name" value="TRNASYNTHLEU"/>
</dbReference>
<dbReference type="SUPFAM" id="SSF47323">
    <property type="entry name" value="Anticodon-binding domain of a subclass of class I aminoacyl-tRNA synthetases"/>
    <property type="match status" value="1"/>
</dbReference>
<dbReference type="SUPFAM" id="SSF52374">
    <property type="entry name" value="Nucleotidylyl transferase"/>
    <property type="match status" value="1"/>
</dbReference>
<dbReference type="SUPFAM" id="SSF50677">
    <property type="entry name" value="ValRS/IleRS/LeuRS editing domain"/>
    <property type="match status" value="1"/>
</dbReference>
<dbReference type="PROSITE" id="PS00178">
    <property type="entry name" value="AA_TRNA_LIGASE_I"/>
    <property type="match status" value="1"/>
</dbReference>
<feature type="chain" id="PRO_1000091368" description="Leucine--tRNA ligase">
    <location>
        <begin position="1"/>
        <end position="880"/>
    </location>
</feature>
<feature type="short sequence motif" description="'HIGH' region">
    <location>
        <begin position="46"/>
        <end position="56"/>
    </location>
</feature>
<feature type="short sequence motif" description="'KMSKS' region">
    <location>
        <begin position="638"/>
        <end position="642"/>
    </location>
</feature>
<feature type="binding site" evidence="1">
    <location>
        <position position="641"/>
    </location>
    <ligand>
        <name>ATP</name>
        <dbReference type="ChEBI" id="CHEBI:30616"/>
    </ligand>
</feature>
<accession>B2FPR7</accession>
<gene>
    <name evidence="1" type="primary">leuS</name>
    <name type="ordered locus">Smlt3485</name>
</gene>
<comment type="catalytic activity">
    <reaction evidence="1">
        <text>tRNA(Leu) + L-leucine + ATP = L-leucyl-tRNA(Leu) + AMP + diphosphate</text>
        <dbReference type="Rhea" id="RHEA:11688"/>
        <dbReference type="Rhea" id="RHEA-COMP:9613"/>
        <dbReference type="Rhea" id="RHEA-COMP:9622"/>
        <dbReference type="ChEBI" id="CHEBI:30616"/>
        <dbReference type="ChEBI" id="CHEBI:33019"/>
        <dbReference type="ChEBI" id="CHEBI:57427"/>
        <dbReference type="ChEBI" id="CHEBI:78442"/>
        <dbReference type="ChEBI" id="CHEBI:78494"/>
        <dbReference type="ChEBI" id="CHEBI:456215"/>
        <dbReference type="EC" id="6.1.1.4"/>
    </reaction>
</comment>
<comment type="subcellular location">
    <subcellularLocation>
        <location evidence="1">Cytoplasm</location>
    </subcellularLocation>
</comment>
<comment type="similarity">
    <text evidence="1">Belongs to the class-I aminoacyl-tRNA synthetase family.</text>
</comment>
<proteinExistence type="inferred from homology"/>
<protein>
    <recommendedName>
        <fullName evidence="1">Leucine--tRNA ligase</fullName>
        <ecNumber evidence="1">6.1.1.4</ecNumber>
    </recommendedName>
    <alternativeName>
        <fullName evidence="1">Leucyl-tRNA synthetase</fullName>
        <shortName evidence="1">LeuRS</shortName>
    </alternativeName>
</protein>
<evidence type="ECO:0000255" key="1">
    <source>
        <dbReference type="HAMAP-Rule" id="MF_00049"/>
    </source>
</evidence>
<reference key="1">
    <citation type="journal article" date="2008" name="Genome Biol.">
        <title>The complete genome, comparative and functional analysis of Stenotrophomonas maltophilia reveals an organism heavily shielded by drug resistance determinants.</title>
        <authorList>
            <person name="Crossman L.C."/>
            <person name="Gould V.C."/>
            <person name="Dow J.M."/>
            <person name="Vernikos G.S."/>
            <person name="Okazaki A."/>
            <person name="Sebaihia M."/>
            <person name="Saunders D."/>
            <person name="Arrowsmith C."/>
            <person name="Carver T."/>
            <person name="Peters N."/>
            <person name="Adlem E."/>
            <person name="Kerhornou A."/>
            <person name="Lord A."/>
            <person name="Murphy L."/>
            <person name="Seeger K."/>
            <person name="Squares R."/>
            <person name="Rutter S."/>
            <person name="Quail M.A."/>
            <person name="Rajandream M.A."/>
            <person name="Harris D."/>
            <person name="Churcher C."/>
            <person name="Bentley S.D."/>
            <person name="Parkhill J."/>
            <person name="Thomson N.R."/>
            <person name="Avison M.B."/>
        </authorList>
    </citation>
    <scope>NUCLEOTIDE SEQUENCE [LARGE SCALE GENOMIC DNA]</scope>
    <source>
        <strain>K279a</strain>
    </source>
</reference>
<sequence length="880" mass="98446">MTSAETNAYDPQQVESAAQKYWDATRAFEVDETSDKPKYYCLSMLPYPSGALHMGHVRNYTIGDVISRYKRMTGHNVLQPMGWDAFGLPAENAAIKNKTAPAAWTYKNIEHMRGQFKAMGYAVDWSREFATCRPDYYVHEQRMFTRLMRKGLAYRRNAVVNWDPVDQTVLANEQVIDGRGWRSGALVEKREIPQWFLRITDYAQELLDGLDELDGWPDSVKTMQRNWIGRSEGLEIQFDVRDVDGTALDPLRVFTTRPDTVMGVTFVSIAAEHPLALHAAKNNPELAALLSEMKQGGVSEAELETQEKRGMDTGLRAIHPVTGEKVPVWVANFVLMGYGTGAVMAVPGHDQRDNEVANKYGLPIKQVIALKDPRNDDERTWDGARWQDWYSDKNRAFELVNSAEFDGLDFQGAFEALAERFERKAQGQRRVNYRLRDWGVSRQRYWGCPIPVIYCDKCGAVPVPEEQLPVVLPEDVAFSGTGSPIKTDPEWRKTTCPECGGAAERETDTFDTFMESSWYYARYTSPGARDAVDKRGNYWLPVDQYIGGIEHAILHLMYFRFYHKLLRDARMVDSNEPARNLLCQGMVIAETYYRPNPDGSKDWINPADVEVQRDERGRITGATLIADGQPVVVGGTEKMSKSKNNGVDPQAMVDKYGADTVRLFSMFAAPPEQSLEWNEAGVDGMARFLRRLWAQVQKHAADGAAPALDVAALDANQKALRRKTHETIGKVGDDYGRRHSFNTAIAAVMELMNALAKFEDGSEQGRAVRQEALQAIVLLLNPITPHASHALWQVLGHGETLLEDQPFPQADAGALVRDALTLAVQVNGKLRGTIEVAADAAREQVEALALAEPNAAKFMEGLTVRKIIIVPGKIVNIVAA</sequence>
<organism>
    <name type="scientific">Stenotrophomonas maltophilia (strain K279a)</name>
    <dbReference type="NCBI Taxonomy" id="522373"/>
    <lineage>
        <taxon>Bacteria</taxon>
        <taxon>Pseudomonadati</taxon>
        <taxon>Pseudomonadota</taxon>
        <taxon>Gammaproteobacteria</taxon>
        <taxon>Lysobacterales</taxon>
        <taxon>Lysobacteraceae</taxon>
        <taxon>Stenotrophomonas</taxon>
        <taxon>Stenotrophomonas maltophilia group</taxon>
    </lineage>
</organism>
<name>SYL_STRMK</name>
<keyword id="KW-0030">Aminoacyl-tRNA synthetase</keyword>
<keyword id="KW-0067">ATP-binding</keyword>
<keyword id="KW-0963">Cytoplasm</keyword>
<keyword id="KW-0436">Ligase</keyword>
<keyword id="KW-0547">Nucleotide-binding</keyword>
<keyword id="KW-0648">Protein biosynthesis</keyword>
<keyword id="KW-1185">Reference proteome</keyword>